<reference key="1">
    <citation type="journal article" date="2008" name="Chem. Biol. Interact.">
        <title>Extending the Bacillus cereus group genomics to putative food-borne pathogens of different toxicity.</title>
        <authorList>
            <person name="Lapidus A."/>
            <person name="Goltsman E."/>
            <person name="Auger S."/>
            <person name="Galleron N."/>
            <person name="Segurens B."/>
            <person name="Dossat C."/>
            <person name="Land M.L."/>
            <person name="Broussolle V."/>
            <person name="Brillard J."/>
            <person name="Guinebretiere M.-H."/>
            <person name="Sanchis V."/>
            <person name="Nguen-the C."/>
            <person name="Lereclus D."/>
            <person name="Richardson P."/>
            <person name="Wincker P."/>
            <person name="Weissenbach J."/>
            <person name="Ehrlich S.D."/>
            <person name="Sorokin A."/>
        </authorList>
    </citation>
    <scope>NUCLEOTIDE SEQUENCE [LARGE SCALE GENOMIC DNA]</scope>
    <source>
        <strain>KBAB4</strain>
    </source>
</reference>
<dbReference type="EMBL" id="CP000903">
    <property type="protein sequence ID" value="ABY42675.1"/>
    <property type="molecule type" value="Genomic_DNA"/>
</dbReference>
<dbReference type="RefSeq" id="WP_002011811.1">
    <property type="nucleotide sequence ID" value="NZ_CAKMRX030000177.1"/>
</dbReference>
<dbReference type="SMR" id="A9VMB3"/>
<dbReference type="GeneID" id="66263444"/>
<dbReference type="KEGG" id="bwe:BcerKBAB4_1428"/>
<dbReference type="eggNOG" id="COG1160">
    <property type="taxonomic scope" value="Bacteria"/>
</dbReference>
<dbReference type="HOGENOM" id="CLU_016077_6_2_9"/>
<dbReference type="Proteomes" id="UP000002154">
    <property type="component" value="Chromosome"/>
</dbReference>
<dbReference type="GO" id="GO:0005525">
    <property type="term" value="F:GTP binding"/>
    <property type="evidence" value="ECO:0007669"/>
    <property type="project" value="UniProtKB-UniRule"/>
</dbReference>
<dbReference type="GO" id="GO:0043022">
    <property type="term" value="F:ribosome binding"/>
    <property type="evidence" value="ECO:0007669"/>
    <property type="project" value="TreeGrafter"/>
</dbReference>
<dbReference type="GO" id="GO:0042254">
    <property type="term" value="P:ribosome biogenesis"/>
    <property type="evidence" value="ECO:0007669"/>
    <property type="project" value="UniProtKB-KW"/>
</dbReference>
<dbReference type="CDD" id="cd01894">
    <property type="entry name" value="EngA1"/>
    <property type="match status" value="1"/>
</dbReference>
<dbReference type="CDD" id="cd01895">
    <property type="entry name" value="EngA2"/>
    <property type="match status" value="1"/>
</dbReference>
<dbReference type="FunFam" id="3.30.300.20:FF:000004">
    <property type="entry name" value="GTPase Der"/>
    <property type="match status" value="1"/>
</dbReference>
<dbReference type="FunFam" id="3.40.50.300:FF:000040">
    <property type="entry name" value="GTPase Der"/>
    <property type="match status" value="1"/>
</dbReference>
<dbReference type="FunFam" id="3.40.50.300:FF:000057">
    <property type="entry name" value="GTPase Der"/>
    <property type="match status" value="1"/>
</dbReference>
<dbReference type="Gene3D" id="3.30.300.20">
    <property type="match status" value="1"/>
</dbReference>
<dbReference type="Gene3D" id="3.40.50.300">
    <property type="entry name" value="P-loop containing nucleotide triphosphate hydrolases"/>
    <property type="match status" value="2"/>
</dbReference>
<dbReference type="HAMAP" id="MF_00195">
    <property type="entry name" value="GTPase_Der"/>
    <property type="match status" value="1"/>
</dbReference>
<dbReference type="InterPro" id="IPR031166">
    <property type="entry name" value="G_ENGA"/>
</dbReference>
<dbReference type="InterPro" id="IPR006073">
    <property type="entry name" value="GTP-bd"/>
</dbReference>
<dbReference type="InterPro" id="IPR016484">
    <property type="entry name" value="GTPase_Der"/>
</dbReference>
<dbReference type="InterPro" id="IPR032859">
    <property type="entry name" value="KH_dom-like"/>
</dbReference>
<dbReference type="InterPro" id="IPR015946">
    <property type="entry name" value="KH_dom-like_a/b"/>
</dbReference>
<dbReference type="InterPro" id="IPR027417">
    <property type="entry name" value="P-loop_NTPase"/>
</dbReference>
<dbReference type="InterPro" id="IPR005225">
    <property type="entry name" value="Small_GTP-bd"/>
</dbReference>
<dbReference type="NCBIfam" id="TIGR03594">
    <property type="entry name" value="GTPase_EngA"/>
    <property type="match status" value="1"/>
</dbReference>
<dbReference type="NCBIfam" id="TIGR00231">
    <property type="entry name" value="small_GTP"/>
    <property type="match status" value="2"/>
</dbReference>
<dbReference type="PANTHER" id="PTHR43834">
    <property type="entry name" value="GTPASE DER"/>
    <property type="match status" value="1"/>
</dbReference>
<dbReference type="PANTHER" id="PTHR43834:SF6">
    <property type="entry name" value="GTPASE DER"/>
    <property type="match status" value="1"/>
</dbReference>
<dbReference type="Pfam" id="PF14714">
    <property type="entry name" value="KH_dom-like"/>
    <property type="match status" value="1"/>
</dbReference>
<dbReference type="Pfam" id="PF01926">
    <property type="entry name" value="MMR_HSR1"/>
    <property type="match status" value="2"/>
</dbReference>
<dbReference type="PIRSF" id="PIRSF006485">
    <property type="entry name" value="GTP-binding_EngA"/>
    <property type="match status" value="1"/>
</dbReference>
<dbReference type="PRINTS" id="PR00326">
    <property type="entry name" value="GTP1OBG"/>
</dbReference>
<dbReference type="SUPFAM" id="SSF52540">
    <property type="entry name" value="P-loop containing nucleoside triphosphate hydrolases"/>
    <property type="match status" value="2"/>
</dbReference>
<dbReference type="PROSITE" id="PS51712">
    <property type="entry name" value="G_ENGA"/>
    <property type="match status" value="2"/>
</dbReference>
<protein>
    <recommendedName>
        <fullName evidence="1">GTPase Der</fullName>
    </recommendedName>
    <alternativeName>
        <fullName evidence="1">GTP-binding protein EngA</fullName>
    </alternativeName>
</protein>
<proteinExistence type="inferred from homology"/>
<keyword id="KW-0342">GTP-binding</keyword>
<keyword id="KW-0547">Nucleotide-binding</keyword>
<keyword id="KW-0677">Repeat</keyword>
<keyword id="KW-0690">Ribosome biogenesis</keyword>
<feature type="chain" id="PRO_1000099091" description="GTPase Der">
    <location>
        <begin position="1"/>
        <end position="436"/>
    </location>
</feature>
<feature type="domain" description="EngA-type G 1">
    <location>
        <begin position="4"/>
        <end position="167"/>
    </location>
</feature>
<feature type="domain" description="EngA-type G 2">
    <location>
        <begin position="176"/>
        <end position="351"/>
    </location>
</feature>
<feature type="domain" description="KH-like" evidence="1">
    <location>
        <begin position="352"/>
        <end position="436"/>
    </location>
</feature>
<feature type="binding site" evidence="1">
    <location>
        <begin position="10"/>
        <end position="17"/>
    </location>
    <ligand>
        <name>GTP</name>
        <dbReference type="ChEBI" id="CHEBI:37565"/>
        <label>1</label>
    </ligand>
</feature>
<feature type="binding site" evidence="1">
    <location>
        <begin position="57"/>
        <end position="61"/>
    </location>
    <ligand>
        <name>GTP</name>
        <dbReference type="ChEBI" id="CHEBI:37565"/>
        <label>1</label>
    </ligand>
</feature>
<feature type="binding site" evidence="1">
    <location>
        <begin position="119"/>
        <end position="122"/>
    </location>
    <ligand>
        <name>GTP</name>
        <dbReference type="ChEBI" id="CHEBI:37565"/>
        <label>1</label>
    </ligand>
</feature>
<feature type="binding site" evidence="1">
    <location>
        <begin position="182"/>
        <end position="189"/>
    </location>
    <ligand>
        <name>GTP</name>
        <dbReference type="ChEBI" id="CHEBI:37565"/>
        <label>2</label>
    </ligand>
</feature>
<feature type="binding site" evidence="1">
    <location>
        <begin position="229"/>
        <end position="233"/>
    </location>
    <ligand>
        <name>GTP</name>
        <dbReference type="ChEBI" id="CHEBI:37565"/>
        <label>2</label>
    </ligand>
</feature>
<feature type="binding site" evidence="1">
    <location>
        <begin position="294"/>
        <end position="297"/>
    </location>
    <ligand>
        <name>GTP</name>
        <dbReference type="ChEBI" id="CHEBI:37565"/>
        <label>2</label>
    </ligand>
</feature>
<accession>A9VMB3</accession>
<organism>
    <name type="scientific">Bacillus mycoides (strain KBAB4)</name>
    <name type="common">Bacillus weihenstephanensis</name>
    <dbReference type="NCBI Taxonomy" id="315730"/>
    <lineage>
        <taxon>Bacteria</taxon>
        <taxon>Bacillati</taxon>
        <taxon>Bacillota</taxon>
        <taxon>Bacilli</taxon>
        <taxon>Bacillales</taxon>
        <taxon>Bacillaceae</taxon>
        <taxon>Bacillus</taxon>
        <taxon>Bacillus cereus group</taxon>
    </lineage>
</organism>
<evidence type="ECO:0000255" key="1">
    <source>
        <dbReference type="HAMAP-Rule" id="MF_00195"/>
    </source>
</evidence>
<sequence>MPKPVIAIVGRPNVGKSTIFNRIVGERVSIVEDIPGITRDRIYSAGEWLNHEFNIIDTGGIDIGDEPFLTQIRQQAEVAIDEADVIIFMTNGRDGVTAADEEVAKILYRSKKPIVLAVNKVDNPDMRSDIYDFYALGFGEPFPISGTHGLGLGDLLDEAANHFPKIEEEAYDDETIRFSLIGRPNVGKSSLVNALLGQERVIVSNIAGTTRDAVDTPYSKDDQDYVIIDTAGMRKKGKVYESTEKYSVLRALRAIERSDVVLVVLDGEEGIIEQDKKIAGYAHDSGRAVIIVVNKWDAVKKDEKTMKAFEENIRAHFQFLEYAPIVFLSAKTKKRTQTLLPVINEVNESHSIRVQTNVLNDVIMDAVAMNPTPTHNGSRLKIFYATQVAVKPPTFVIFVNDTELMHFSYERFLKNRLREAFGFVGTPIHIIARARD</sequence>
<name>DER_BACMK</name>
<gene>
    <name evidence="1" type="primary">der</name>
    <name type="synonym">engA</name>
    <name type="ordered locus">BcerKBAB4_1428</name>
</gene>
<comment type="function">
    <text evidence="1">GTPase that plays an essential role in the late steps of ribosome biogenesis.</text>
</comment>
<comment type="subunit">
    <text evidence="1">Associates with the 50S ribosomal subunit.</text>
</comment>
<comment type="similarity">
    <text evidence="1">Belongs to the TRAFAC class TrmE-Era-EngA-EngB-Septin-like GTPase superfamily. EngA (Der) GTPase family.</text>
</comment>